<comment type="function">
    <text evidence="1">Catalyzes the GTP-dependent ribosomal translocation step during translation elongation. During this step, the ribosome changes from the pre-translocational (PRE) to the post-translocational (POST) state as the newly formed A-site-bound peptidyl-tRNA and P-site-bound deacylated tRNA move to the P and E sites, respectively. Catalyzes the coordinated movement of the two tRNA molecules, the mRNA and conformational changes in the ribosome.</text>
</comment>
<comment type="subcellular location">
    <subcellularLocation>
        <location evidence="1">Cytoplasm</location>
    </subcellularLocation>
</comment>
<comment type="similarity">
    <text evidence="1">Belongs to the TRAFAC class translation factor GTPase superfamily. Classic translation factor GTPase family. EF-G/EF-2 subfamily.</text>
</comment>
<dbReference type="EMBL" id="AP008232">
    <property type="protein sequence ID" value="BAE75559.1"/>
    <property type="molecule type" value="Genomic_DNA"/>
</dbReference>
<dbReference type="RefSeq" id="WP_011412092.1">
    <property type="nucleotide sequence ID" value="NC_007712.1"/>
</dbReference>
<dbReference type="SMR" id="Q2NQL6"/>
<dbReference type="STRING" id="343509.SG2284"/>
<dbReference type="KEGG" id="sgl:SG2284"/>
<dbReference type="eggNOG" id="COG0480">
    <property type="taxonomic scope" value="Bacteria"/>
</dbReference>
<dbReference type="HOGENOM" id="CLU_002794_4_1_6"/>
<dbReference type="OrthoDB" id="9804431at2"/>
<dbReference type="BioCyc" id="SGLO343509:SGP1_RS20875-MONOMER"/>
<dbReference type="Proteomes" id="UP000001932">
    <property type="component" value="Chromosome"/>
</dbReference>
<dbReference type="GO" id="GO:0005737">
    <property type="term" value="C:cytoplasm"/>
    <property type="evidence" value="ECO:0007669"/>
    <property type="project" value="UniProtKB-SubCell"/>
</dbReference>
<dbReference type="GO" id="GO:0005525">
    <property type="term" value="F:GTP binding"/>
    <property type="evidence" value="ECO:0007669"/>
    <property type="project" value="UniProtKB-UniRule"/>
</dbReference>
<dbReference type="GO" id="GO:0003924">
    <property type="term" value="F:GTPase activity"/>
    <property type="evidence" value="ECO:0007669"/>
    <property type="project" value="InterPro"/>
</dbReference>
<dbReference type="GO" id="GO:0097216">
    <property type="term" value="F:guanosine tetraphosphate binding"/>
    <property type="evidence" value="ECO:0007669"/>
    <property type="project" value="UniProtKB-ARBA"/>
</dbReference>
<dbReference type="GO" id="GO:0003746">
    <property type="term" value="F:translation elongation factor activity"/>
    <property type="evidence" value="ECO:0007669"/>
    <property type="project" value="UniProtKB-UniRule"/>
</dbReference>
<dbReference type="GO" id="GO:0032790">
    <property type="term" value="P:ribosome disassembly"/>
    <property type="evidence" value="ECO:0007669"/>
    <property type="project" value="TreeGrafter"/>
</dbReference>
<dbReference type="CDD" id="cd01886">
    <property type="entry name" value="EF-G"/>
    <property type="match status" value="1"/>
</dbReference>
<dbReference type="CDD" id="cd16262">
    <property type="entry name" value="EFG_III"/>
    <property type="match status" value="1"/>
</dbReference>
<dbReference type="CDD" id="cd01434">
    <property type="entry name" value="EFG_mtEFG1_IV"/>
    <property type="match status" value="1"/>
</dbReference>
<dbReference type="CDD" id="cd03713">
    <property type="entry name" value="EFG_mtEFG_C"/>
    <property type="match status" value="1"/>
</dbReference>
<dbReference type="CDD" id="cd04088">
    <property type="entry name" value="EFG_mtEFG_II"/>
    <property type="match status" value="1"/>
</dbReference>
<dbReference type="FunFam" id="2.40.30.10:FF:000006">
    <property type="entry name" value="Elongation factor G"/>
    <property type="match status" value="1"/>
</dbReference>
<dbReference type="FunFam" id="3.30.230.10:FF:000003">
    <property type="entry name" value="Elongation factor G"/>
    <property type="match status" value="1"/>
</dbReference>
<dbReference type="FunFam" id="3.30.70.240:FF:000001">
    <property type="entry name" value="Elongation factor G"/>
    <property type="match status" value="1"/>
</dbReference>
<dbReference type="FunFam" id="3.30.70.870:FF:000001">
    <property type="entry name" value="Elongation factor G"/>
    <property type="match status" value="1"/>
</dbReference>
<dbReference type="FunFam" id="3.40.50.300:FF:000029">
    <property type="entry name" value="Elongation factor G"/>
    <property type="match status" value="1"/>
</dbReference>
<dbReference type="Gene3D" id="3.30.230.10">
    <property type="match status" value="1"/>
</dbReference>
<dbReference type="Gene3D" id="3.30.70.240">
    <property type="match status" value="1"/>
</dbReference>
<dbReference type="Gene3D" id="3.30.70.870">
    <property type="entry name" value="Elongation Factor G (Translational Gtpase), domain 3"/>
    <property type="match status" value="1"/>
</dbReference>
<dbReference type="Gene3D" id="3.40.50.300">
    <property type="entry name" value="P-loop containing nucleotide triphosphate hydrolases"/>
    <property type="match status" value="1"/>
</dbReference>
<dbReference type="Gene3D" id="2.40.30.10">
    <property type="entry name" value="Translation factors"/>
    <property type="match status" value="1"/>
</dbReference>
<dbReference type="HAMAP" id="MF_00054_B">
    <property type="entry name" value="EF_G_EF_2_B"/>
    <property type="match status" value="1"/>
</dbReference>
<dbReference type="InterPro" id="IPR041095">
    <property type="entry name" value="EFG_II"/>
</dbReference>
<dbReference type="InterPro" id="IPR009022">
    <property type="entry name" value="EFG_III"/>
</dbReference>
<dbReference type="InterPro" id="IPR035647">
    <property type="entry name" value="EFG_III/V"/>
</dbReference>
<dbReference type="InterPro" id="IPR047872">
    <property type="entry name" value="EFG_IV"/>
</dbReference>
<dbReference type="InterPro" id="IPR035649">
    <property type="entry name" value="EFG_V"/>
</dbReference>
<dbReference type="InterPro" id="IPR000640">
    <property type="entry name" value="EFG_V-like"/>
</dbReference>
<dbReference type="InterPro" id="IPR004161">
    <property type="entry name" value="EFTu-like_2"/>
</dbReference>
<dbReference type="InterPro" id="IPR031157">
    <property type="entry name" value="G_TR_CS"/>
</dbReference>
<dbReference type="InterPro" id="IPR027417">
    <property type="entry name" value="P-loop_NTPase"/>
</dbReference>
<dbReference type="InterPro" id="IPR020568">
    <property type="entry name" value="Ribosomal_Su5_D2-typ_SF"/>
</dbReference>
<dbReference type="InterPro" id="IPR014721">
    <property type="entry name" value="Ribsml_uS5_D2-typ_fold_subgr"/>
</dbReference>
<dbReference type="InterPro" id="IPR005225">
    <property type="entry name" value="Small_GTP-bd"/>
</dbReference>
<dbReference type="InterPro" id="IPR000795">
    <property type="entry name" value="T_Tr_GTP-bd_dom"/>
</dbReference>
<dbReference type="InterPro" id="IPR009000">
    <property type="entry name" value="Transl_B-barrel_sf"/>
</dbReference>
<dbReference type="InterPro" id="IPR004540">
    <property type="entry name" value="Transl_elong_EFG/EF2"/>
</dbReference>
<dbReference type="InterPro" id="IPR005517">
    <property type="entry name" value="Transl_elong_EFG/EF2_IV"/>
</dbReference>
<dbReference type="NCBIfam" id="TIGR00484">
    <property type="entry name" value="EF-G"/>
    <property type="match status" value="1"/>
</dbReference>
<dbReference type="NCBIfam" id="NF009381">
    <property type="entry name" value="PRK12740.1-5"/>
    <property type="match status" value="1"/>
</dbReference>
<dbReference type="NCBIfam" id="TIGR00231">
    <property type="entry name" value="small_GTP"/>
    <property type="match status" value="1"/>
</dbReference>
<dbReference type="PANTHER" id="PTHR43261:SF1">
    <property type="entry name" value="RIBOSOME-RELEASING FACTOR 2, MITOCHONDRIAL"/>
    <property type="match status" value="1"/>
</dbReference>
<dbReference type="PANTHER" id="PTHR43261">
    <property type="entry name" value="TRANSLATION ELONGATION FACTOR G-RELATED"/>
    <property type="match status" value="1"/>
</dbReference>
<dbReference type="Pfam" id="PF00679">
    <property type="entry name" value="EFG_C"/>
    <property type="match status" value="1"/>
</dbReference>
<dbReference type="Pfam" id="PF14492">
    <property type="entry name" value="EFG_III"/>
    <property type="match status" value="1"/>
</dbReference>
<dbReference type="Pfam" id="PF03764">
    <property type="entry name" value="EFG_IV"/>
    <property type="match status" value="1"/>
</dbReference>
<dbReference type="Pfam" id="PF00009">
    <property type="entry name" value="GTP_EFTU"/>
    <property type="match status" value="1"/>
</dbReference>
<dbReference type="Pfam" id="PF03144">
    <property type="entry name" value="GTP_EFTU_D2"/>
    <property type="match status" value="1"/>
</dbReference>
<dbReference type="PRINTS" id="PR00315">
    <property type="entry name" value="ELONGATNFCT"/>
</dbReference>
<dbReference type="SMART" id="SM00838">
    <property type="entry name" value="EFG_C"/>
    <property type="match status" value="1"/>
</dbReference>
<dbReference type="SMART" id="SM00889">
    <property type="entry name" value="EFG_IV"/>
    <property type="match status" value="1"/>
</dbReference>
<dbReference type="SUPFAM" id="SSF54980">
    <property type="entry name" value="EF-G C-terminal domain-like"/>
    <property type="match status" value="2"/>
</dbReference>
<dbReference type="SUPFAM" id="SSF52540">
    <property type="entry name" value="P-loop containing nucleoside triphosphate hydrolases"/>
    <property type="match status" value="1"/>
</dbReference>
<dbReference type="SUPFAM" id="SSF54211">
    <property type="entry name" value="Ribosomal protein S5 domain 2-like"/>
    <property type="match status" value="1"/>
</dbReference>
<dbReference type="SUPFAM" id="SSF50447">
    <property type="entry name" value="Translation proteins"/>
    <property type="match status" value="1"/>
</dbReference>
<dbReference type="PROSITE" id="PS00301">
    <property type="entry name" value="G_TR_1"/>
    <property type="match status" value="1"/>
</dbReference>
<dbReference type="PROSITE" id="PS51722">
    <property type="entry name" value="G_TR_2"/>
    <property type="match status" value="1"/>
</dbReference>
<feature type="chain" id="PRO_0000263512" description="Elongation factor G">
    <location>
        <begin position="1"/>
        <end position="701"/>
    </location>
</feature>
<feature type="domain" description="tr-type G">
    <location>
        <begin position="8"/>
        <end position="290"/>
    </location>
</feature>
<feature type="binding site" evidence="1">
    <location>
        <begin position="17"/>
        <end position="24"/>
    </location>
    <ligand>
        <name>GTP</name>
        <dbReference type="ChEBI" id="CHEBI:37565"/>
    </ligand>
</feature>
<feature type="binding site" evidence="1">
    <location>
        <begin position="88"/>
        <end position="92"/>
    </location>
    <ligand>
        <name>GTP</name>
        <dbReference type="ChEBI" id="CHEBI:37565"/>
    </ligand>
</feature>
<feature type="binding site" evidence="1">
    <location>
        <begin position="142"/>
        <end position="145"/>
    </location>
    <ligand>
        <name>GTP</name>
        <dbReference type="ChEBI" id="CHEBI:37565"/>
    </ligand>
</feature>
<keyword id="KW-0963">Cytoplasm</keyword>
<keyword id="KW-0251">Elongation factor</keyword>
<keyword id="KW-0342">GTP-binding</keyword>
<keyword id="KW-0547">Nucleotide-binding</keyword>
<keyword id="KW-0648">Protein biosynthesis</keyword>
<accession>Q2NQL6</accession>
<proteinExistence type="inferred from homology"/>
<protein>
    <recommendedName>
        <fullName evidence="1">Elongation factor G</fullName>
        <shortName evidence="1">EF-G</shortName>
    </recommendedName>
</protein>
<reference key="1">
    <citation type="journal article" date="2006" name="Genome Res.">
        <title>Massive genome erosion and functional adaptations provide insights into the symbiotic lifestyle of Sodalis glossinidius in the tsetse host.</title>
        <authorList>
            <person name="Toh H."/>
            <person name="Weiss B.L."/>
            <person name="Perkin S.A.H."/>
            <person name="Yamashita A."/>
            <person name="Oshima K."/>
            <person name="Hattori M."/>
            <person name="Aksoy S."/>
        </authorList>
    </citation>
    <scope>NUCLEOTIDE SEQUENCE [LARGE SCALE GENOMIC DNA]</scope>
    <source>
        <strain>morsitans</strain>
    </source>
</reference>
<sequence>MARITPIARYRNIGISAHIDAGKTTTTERILFYTGVNHKIGEVHNGAATMDWMAQEQERGITITSAATTCFWAGMAKQFDSHRINIIDTPGHVDFTIEVERSMRVLDGAVMVYCAVGGVQPQSETVWRQANKYKVPRIAFVNKMDRMGANYLRVVEQLKTRLAANPVPIQLAIGAEEKFTGVVDLVKMKAINWSEADQGVTFTYEDIPADLTELADKWHQHLVESAAEASEELMDKYLGGEELTEEEIKHGLRQRVLNNEIILVTCGSAFKNKGVQAMLDAVIEYLPAPTDVAAINGVLEDGETHAERHSSDEEPFSALAFKIATDPFVGNLTFFRVYSGVVNSGDTVLNSVKDKRERFGRIVQMHANKREEIKEVRAGDIAAAIGLKDVTTGDTLCDTSAPIILERMEFPEPVISVAVEPKTKADQEKMGLALGRLAQEDPSFRVWTDEESGQTIIAGMGELHLEILVDRMRREFNVEANVGKPQVAYRETIRSIVEQEGKFVRQSGGRGQFGHVWLRIEPMEPGGKGYEFLNEIVGGVVPKEYVPAVDKGVQEQLKSGVLAGYPIVDVRVAAFDGSYHEVDSSEMAFKIAGSMAFKEGFMKAKPVLLEPIMKVEVETPEDYMGDVIGDLNRRRGMIDGMEDTTTGKTVRAQVPLSEMFGYATDLRSQTQGRASYSMEFLKYNEAPNNVAQAIIETRRAK</sequence>
<gene>
    <name evidence="1" type="primary">fusA</name>
    <name type="ordered locus">SG2284</name>
</gene>
<organism>
    <name type="scientific">Sodalis glossinidius (strain morsitans)</name>
    <dbReference type="NCBI Taxonomy" id="343509"/>
    <lineage>
        <taxon>Bacteria</taxon>
        <taxon>Pseudomonadati</taxon>
        <taxon>Pseudomonadota</taxon>
        <taxon>Gammaproteobacteria</taxon>
        <taxon>Enterobacterales</taxon>
        <taxon>Bruguierivoracaceae</taxon>
        <taxon>Sodalis</taxon>
    </lineage>
</organism>
<evidence type="ECO:0000255" key="1">
    <source>
        <dbReference type="HAMAP-Rule" id="MF_00054"/>
    </source>
</evidence>
<name>EFG_SODGM</name>